<feature type="chain" id="PRO_0000149934" description="Diaminopimelate decarboxylase">
    <location>
        <begin position="1"/>
        <end position="416"/>
    </location>
</feature>
<feature type="active site" description="Proton donor" evidence="1">
    <location>
        <position position="343"/>
    </location>
</feature>
<feature type="binding site" evidence="2">
    <location>
        <position position="240"/>
    </location>
    <ligand>
        <name>pyridoxal 5'-phosphate</name>
        <dbReference type="ChEBI" id="CHEBI:597326"/>
    </ligand>
</feature>
<feature type="binding site" evidence="2">
    <location>
        <begin position="274"/>
        <end position="277"/>
    </location>
    <ligand>
        <name>pyridoxal 5'-phosphate</name>
        <dbReference type="ChEBI" id="CHEBI:597326"/>
    </ligand>
</feature>
<feature type="binding site" evidence="2">
    <location>
        <position position="277"/>
    </location>
    <ligand>
        <name>substrate</name>
    </ligand>
</feature>
<feature type="binding site" evidence="2">
    <location>
        <position position="313"/>
    </location>
    <ligand>
        <name>substrate</name>
    </ligand>
</feature>
<feature type="binding site" evidence="2">
    <location>
        <position position="317"/>
    </location>
    <ligand>
        <name>substrate</name>
    </ligand>
</feature>
<feature type="binding site" evidence="2">
    <location>
        <position position="344"/>
    </location>
    <ligand>
        <name>substrate</name>
    </ligand>
</feature>
<feature type="binding site" evidence="2">
    <location>
        <position position="371"/>
    </location>
    <ligand>
        <name>pyridoxal 5'-phosphate</name>
        <dbReference type="ChEBI" id="CHEBI:597326"/>
    </ligand>
</feature>
<feature type="binding site" evidence="2">
    <location>
        <position position="371"/>
    </location>
    <ligand>
        <name>substrate</name>
    </ligand>
</feature>
<feature type="modified residue" description="N6-(pyridoxal phosphate)lysine" evidence="2">
    <location>
        <position position="60"/>
    </location>
</feature>
<accession>O05321</accession>
<dbReference type="EC" id="4.1.1.20" evidence="2"/>
<dbReference type="EMBL" id="Y12268">
    <property type="protein sequence ID" value="CAA72943.1"/>
    <property type="molecule type" value="Genomic_DNA"/>
</dbReference>
<dbReference type="PIR" id="T10458">
    <property type="entry name" value="T10458"/>
</dbReference>
<dbReference type="SMR" id="O05321"/>
<dbReference type="eggNOG" id="COG0019">
    <property type="taxonomic scope" value="Bacteria"/>
</dbReference>
<dbReference type="UniPathway" id="UPA00034">
    <property type="reaction ID" value="UER00027"/>
</dbReference>
<dbReference type="GO" id="GO:0008836">
    <property type="term" value="F:diaminopimelate decarboxylase activity"/>
    <property type="evidence" value="ECO:0007669"/>
    <property type="project" value="UniProtKB-UniRule"/>
</dbReference>
<dbReference type="GO" id="GO:0030170">
    <property type="term" value="F:pyridoxal phosphate binding"/>
    <property type="evidence" value="ECO:0007669"/>
    <property type="project" value="UniProtKB-UniRule"/>
</dbReference>
<dbReference type="GO" id="GO:0009089">
    <property type="term" value="P:lysine biosynthetic process via diaminopimelate"/>
    <property type="evidence" value="ECO:0007669"/>
    <property type="project" value="UniProtKB-UniRule"/>
</dbReference>
<dbReference type="CDD" id="cd06828">
    <property type="entry name" value="PLPDE_III_DapDC"/>
    <property type="match status" value="1"/>
</dbReference>
<dbReference type="FunFam" id="2.40.37.10:FF:000003">
    <property type="entry name" value="Diaminopimelate decarboxylase"/>
    <property type="match status" value="1"/>
</dbReference>
<dbReference type="FunFam" id="3.20.20.10:FF:000003">
    <property type="entry name" value="Diaminopimelate decarboxylase"/>
    <property type="match status" value="1"/>
</dbReference>
<dbReference type="Gene3D" id="3.20.20.10">
    <property type="entry name" value="Alanine racemase"/>
    <property type="match status" value="1"/>
</dbReference>
<dbReference type="Gene3D" id="2.40.37.10">
    <property type="entry name" value="Lyase, Ornithine Decarboxylase, Chain A, domain 1"/>
    <property type="match status" value="1"/>
</dbReference>
<dbReference type="HAMAP" id="MF_02120">
    <property type="entry name" value="LysA"/>
    <property type="match status" value="1"/>
</dbReference>
<dbReference type="InterPro" id="IPR009006">
    <property type="entry name" value="Ala_racemase/Decarboxylase_C"/>
</dbReference>
<dbReference type="InterPro" id="IPR002986">
    <property type="entry name" value="DAP_deCOOHase_LysA"/>
</dbReference>
<dbReference type="InterPro" id="IPR022643">
    <property type="entry name" value="De-COase2_C"/>
</dbReference>
<dbReference type="InterPro" id="IPR022657">
    <property type="entry name" value="De-COase2_CS"/>
</dbReference>
<dbReference type="InterPro" id="IPR022644">
    <property type="entry name" value="De-COase2_N"/>
</dbReference>
<dbReference type="InterPro" id="IPR022653">
    <property type="entry name" value="De-COase2_pyr-phos_BS"/>
</dbReference>
<dbReference type="InterPro" id="IPR000183">
    <property type="entry name" value="Orn/DAP/Arg_de-COase"/>
</dbReference>
<dbReference type="InterPro" id="IPR029066">
    <property type="entry name" value="PLP-binding_barrel"/>
</dbReference>
<dbReference type="NCBIfam" id="TIGR01048">
    <property type="entry name" value="lysA"/>
    <property type="match status" value="1"/>
</dbReference>
<dbReference type="PANTHER" id="PTHR43727">
    <property type="entry name" value="DIAMINOPIMELATE DECARBOXYLASE"/>
    <property type="match status" value="1"/>
</dbReference>
<dbReference type="PANTHER" id="PTHR43727:SF2">
    <property type="entry name" value="GROUP IV DECARBOXYLASE"/>
    <property type="match status" value="1"/>
</dbReference>
<dbReference type="Pfam" id="PF02784">
    <property type="entry name" value="Orn_Arg_deC_N"/>
    <property type="match status" value="1"/>
</dbReference>
<dbReference type="Pfam" id="PF00278">
    <property type="entry name" value="Orn_DAP_Arg_deC"/>
    <property type="match status" value="1"/>
</dbReference>
<dbReference type="PRINTS" id="PR01181">
    <property type="entry name" value="DAPDCRBXLASE"/>
</dbReference>
<dbReference type="PRINTS" id="PR01179">
    <property type="entry name" value="ODADCRBXLASE"/>
</dbReference>
<dbReference type="SUPFAM" id="SSF50621">
    <property type="entry name" value="Alanine racemase C-terminal domain-like"/>
    <property type="match status" value="1"/>
</dbReference>
<dbReference type="SUPFAM" id="SSF51419">
    <property type="entry name" value="PLP-binding barrel"/>
    <property type="match status" value="1"/>
</dbReference>
<dbReference type="PROSITE" id="PS00878">
    <property type="entry name" value="ODR_DC_2_1"/>
    <property type="match status" value="1"/>
</dbReference>
<dbReference type="PROSITE" id="PS00879">
    <property type="entry name" value="ODR_DC_2_2"/>
    <property type="match status" value="1"/>
</dbReference>
<comment type="function">
    <text evidence="2">Specifically catalyzes the decarboxylation of meso-diaminopimelate (meso-DAP) to L-lysine.</text>
</comment>
<comment type="catalytic activity">
    <reaction evidence="2">
        <text>meso-2,6-diaminopimelate + H(+) = L-lysine + CO2</text>
        <dbReference type="Rhea" id="RHEA:15101"/>
        <dbReference type="ChEBI" id="CHEBI:15378"/>
        <dbReference type="ChEBI" id="CHEBI:16526"/>
        <dbReference type="ChEBI" id="CHEBI:32551"/>
        <dbReference type="ChEBI" id="CHEBI:57791"/>
        <dbReference type="EC" id="4.1.1.20"/>
    </reaction>
</comment>
<comment type="cofactor">
    <cofactor evidence="2">
        <name>pyridoxal 5'-phosphate</name>
        <dbReference type="ChEBI" id="CHEBI:597326"/>
    </cofactor>
</comment>
<comment type="pathway">
    <text evidence="2">Amino-acid biosynthesis; L-lysine biosynthesis via DAP pathway; L-lysine from DL-2,6-diaminopimelate: step 1/1.</text>
</comment>
<comment type="subunit">
    <text evidence="2">Homodimer.</text>
</comment>
<comment type="similarity">
    <text evidence="2">Belongs to the Orn/Lys/Arg decarboxylase class-II family. LysA subfamily.</text>
</comment>
<organism>
    <name type="scientific">Pseudomonas fluorescens</name>
    <dbReference type="NCBI Taxonomy" id="294"/>
    <lineage>
        <taxon>Bacteria</taxon>
        <taxon>Pseudomonadati</taxon>
        <taxon>Pseudomonadota</taxon>
        <taxon>Gammaproteobacteria</taxon>
        <taxon>Pseudomonadales</taxon>
        <taxon>Pseudomonadaceae</taxon>
        <taxon>Pseudomonas</taxon>
    </lineage>
</organism>
<sequence>MDAFNYRGGELFAEGVALSAIAERFGTPTYVYSRAHIEAQYRTFADALEGMPHLVCFAVKANSNLGVLNVLARLGAGFDIVSGGELERVLAAGGSADKIVFSGVGKTREDMRRALEVGVHCFNIESTDELGSRLQIVAAELGVRAPISLRVNPDVDAGTHPYISTGLKENKFGIAIADAEDVYVRAAQLPNLEVLGVDCHIGSQLTTLEPFIDALDRLLALVDRLGDCGIYLRHIDLGGGVGVRYRDEEPPLVADYIKAVRERLDGRDLALMFEPGRYIVANAGVLLTQVEYLKHTEHKDFAIVDAAMNDLIRPALYQAWMDVTAVRPRDTAARSYDIVGPICETGDFLAKGRELALEEGDLLAVHSAGAYGFVMSSNYNTRGRCAEVLVDGDQAFEVRRRETVAELFAGESLLPE</sequence>
<evidence type="ECO:0000255" key="1"/>
<evidence type="ECO:0000255" key="2">
    <source>
        <dbReference type="HAMAP-Rule" id="MF_02120"/>
    </source>
</evidence>
<keyword id="KW-0028">Amino-acid biosynthesis</keyword>
<keyword id="KW-0210">Decarboxylase</keyword>
<keyword id="KW-0456">Lyase</keyword>
<keyword id="KW-0457">Lysine biosynthesis</keyword>
<keyword id="KW-0663">Pyridoxal phosphate</keyword>
<reference key="1">
    <citation type="journal article" date="1998" name="Proc. Natl. Acad. Sci. U.S.A.">
        <title>A site-specific recombinase is required for competitive root colonization by Pseudomonas fluorescens WCS365.</title>
        <authorList>
            <person name="Dekkers L.C."/>
            <person name="Phoelich C.C."/>
            <person name="van der Fits L."/>
            <person name="Lugtenberg B.J.J."/>
        </authorList>
    </citation>
    <scope>NUCLEOTIDE SEQUENCE [GENOMIC DNA]</scope>
    <source>
        <strain>WCS365</strain>
    </source>
</reference>
<protein>
    <recommendedName>
        <fullName evidence="2">Diaminopimelate decarboxylase</fullName>
        <shortName evidence="2">DAP decarboxylase</shortName>
        <shortName evidence="2">DAPDC</shortName>
        <ecNumber evidence="2">4.1.1.20</ecNumber>
    </recommendedName>
</protein>
<proteinExistence type="inferred from homology"/>
<name>DCDA_PSEFL</name>
<gene>
    <name evidence="2" type="primary">lysA</name>
</gene>